<name>RECX_SALPA</name>
<organism>
    <name type="scientific">Salmonella paratyphi A (strain ATCC 9150 / SARB42)</name>
    <dbReference type="NCBI Taxonomy" id="295319"/>
    <lineage>
        <taxon>Bacteria</taxon>
        <taxon>Pseudomonadati</taxon>
        <taxon>Pseudomonadota</taxon>
        <taxon>Gammaproteobacteria</taxon>
        <taxon>Enterobacterales</taxon>
        <taxon>Enterobacteriaceae</taxon>
        <taxon>Salmonella</taxon>
    </lineage>
</organism>
<feature type="chain" id="PRO_1000065201" description="Regulatory protein RecX">
    <location>
        <begin position="1"/>
        <end position="166"/>
    </location>
</feature>
<reference key="1">
    <citation type="journal article" date="2004" name="Nat. Genet.">
        <title>Comparison of genome degradation in Paratyphi A and Typhi, human-restricted serovars of Salmonella enterica that cause typhoid.</title>
        <authorList>
            <person name="McClelland M."/>
            <person name="Sanderson K.E."/>
            <person name="Clifton S.W."/>
            <person name="Latreille P."/>
            <person name="Porwollik S."/>
            <person name="Sabo A."/>
            <person name="Meyer R."/>
            <person name="Bieri T."/>
            <person name="Ozersky P."/>
            <person name="McLellan M."/>
            <person name="Harkins C.R."/>
            <person name="Wang C."/>
            <person name="Nguyen C."/>
            <person name="Berghoff A."/>
            <person name="Elliott G."/>
            <person name="Kohlberg S."/>
            <person name="Strong C."/>
            <person name="Du F."/>
            <person name="Carter J."/>
            <person name="Kremizki C."/>
            <person name="Layman D."/>
            <person name="Leonard S."/>
            <person name="Sun H."/>
            <person name="Fulton L."/>
            <person name="Nash W."/>
            <person name="Miner T."/>
            <person name="Minx P."/>
            <person name="Delehaunty K."/>
            <person name="Fronick C."/>
            <person name="Magrini V."/>
            <person name="Nhan M."/>
            <person name="Warren W."/>
            <person name="Florea L."/>
            <person name="Spieth J."/>
            <person name="Wilson R.K."/>
        </authorList>
    </citation>
    <scope>NUCLEOTIDE SEQUENCE [LARGE SCALE GENOMIC DNA]</scope>
    <source>
        <strain>ATCC 9150 / SARB42</strain>
    </source>
</reference>
<sequence>MSEPTSRRPAYARLLDRAVRILAVRDHSEQELRRKLSAPVMGKNGPEEIDATADDYERVIAWFHEHHYLDDERFVMRFIASRSRKGYGPARIRQELNQKGISRESTEKAMRECEIDWSEMAREQAVRKYGEPLPSNFSEKVKVQRFLLYRGYLMDDIQQIWRNFAD</sequence>
<accession>Q5PF16</accession>
<dbReference type="EMBL" id="CP000026">
    <property type="protein sequence ID" value="AAV78543.1"/>
    <property type="molecule type" value="Genomic_DNA"/>
</dbReference>
<dbReference type="RefSeq" id="WP_001294868.1">
    <property type="nucleotide sequence ID" value="NC_006511.1"/>
</dbReference>
<dbReference type="SMR" id="Q5PF16"/>
<dbReference type="KEGG" id="spt:SPA2686"/>
<dbReference type="HOGENOM" id="CLU_066607_3_2_6"/>
<dbReference type="Proteomes" id="UP000008185">
    <property type="component" value="Chromosome"/>
</dbReference>
<dbReference type="GO" id="GO:0005737">
    <property type="term" value="C:cytoplasm"/>
    <property type="evidence" value="ECO:0007669"/>
    <property type="project" value="UniProtKB-SubCell"/>
</dbReference>
<dbReference type="GO" id="GO:0006282">
    <property type="term" value="P:regulation of DNA repair"/>
    <property type="evidence" value="ECO:0007669"/>
    <property type="project" value="UniProtKB-UniRule"/>
</dbReference>
<dbReference type="FunFam" id="1.10.10.10:FF:000133">
    <property type="entry name" value="Regulatory protein RecX"/>
    <property type="match status" value="1"/>
</dbReference>
<dbReference type="FunFam" id="1.10.10.10:FF:000134">
    <property type="entry name" value="Regulatory protein RecX"/>
    <property type="match status" value="1"/>
</dbReference>
<dbReference type="Gene3D" id="1.10.10.10">
    <property type="entry name" value="Winged helix-like DNA-binding domain superfamily/Winged helix DNA-binding domain"/>
    <property type="match status" value="3"/>
</dbReference>
<dbReference type="HAMAP" id="MF_01114">
    <property type="entry name" value="RecX"/>
    <property type="match status" value="1"/>
</dbReference>
<dbReference type="InterPro" id="IPR053926">
    <property type="entry name" value="RecX_HTH_1st"/>
</dbReference>
<dbReference type="InterPro" id="IPR053924">
    <property type="entry name" value="RecX_HTH_2nd"/>
</dbReference>
<dbReference type="InterPro" id="IPR053925">
    <property type="entry name" value="RecX_HTH_3rd"/>
</dbReference>
<dbReference type="InterPro" id="IPR003783">
    <property type="entry name" value="Regulatory_RecX"/>
</dbReference>
<dbReference type="InterPro" id="IPR036388">
    <property type="entry name" value="WH-like_DNA-bd_sf"/>
</dbReference>
<dbReference type="NCBIfam" id="NF001052">
    <property type="entry name" value="PRK00117.1-1"/>
    <property type="match status" value="1"/>
</dbReference>
<dbReference type="PANTHER" id="PTHR33602">
    <property type="entry name" value="REGULATORY PROTEIN RECX FAMILY PROTEIN"/>
    <property type="match status" value="1"/>
</dbReference>
<dbReference type="PANTHER" id="PTHR33602:SF1">
    <property type="entry name" value="REGULATORY PROTEIN RECX FAMILY PROTEIN"/>
    <property type="match status" value="1"/>
</dbReference>
<dbReference type="Pfam" id="PF21982">
    <property type="entry name" value="RecX_HTH1"/>
    <property type="match status" value="1"/>
</dbReference>
<dbReference type="Pfam" id="PF02631">
    <property type="entry name" value="RecX_HTH2"/>
    <property type="match status" value="1"/>
</dbReference>
<dbReference type="Pfam" id="PF21981">
    <property type="entry name" value="RecX_HTH3"/>
    <property type="match status" value="1"/>
</dbReference>
<proteinExistence type="inferred from homology"/>
<protein>
    <recommendedName>
        <fullName evidence="1">Regulatory protein RecX</fullName>
    </recommendedName>
</protein>
<evidence type="ECO:0000255" key="1">
    <source>
        <dbReference type="HAMAP-Rule" id="MF_01114"/>
    </source>
</evidence>
<gene>
    <name evidence="1" type="primary">recX</name>
    <name type="ordered locus">SPA2686</name>
</gene>
<comment type="function">
    <text evidence="1">Modulates RecA activity.</text>
</comment>
<comment type="subcellular location">
    <subcellularLocation>
        <location evidence="1">Cytoplasm</location>
    </subcellularLocation>
</comment>
<comment type="similarity">
    <text evidence="1">Belongs to the RecX family.</text>
</comment>
<keyword id="KW-0963">Cytoplasm</keyword>